<feature type="chain" id="PRO_1000143699" description="UPF0391 membrane protein AB57_3884">
    <location>
        <begin position="1"/>
        <end position="52"/>
    </location>
</feature>
<feature type="transmembrane region" description="Helical" evidence="1">
    <location>
        <begin position="6"/>
        <end position="26"/>
    </location>
</feature>
<feature type="transmembrane region" description="Helical" evidence="1">
    <location>
        <begin position="30"/>
        <end position="50"/>
    </location>
</feature>
<dbReference type="EMBL" id="CP001182">
    <property type="protein sequence ID" value="ACJ42812.1"/>
    <property type="molecule type" value="Genomic_DNA"/>
</dbReference>
<dbReference type="RefSeq" id="WP_000490267.1">
    <property type="nucleotide sequence ID" value="NC_011586.2"/>
</dbReference>
<dbReference type="KEGG" id="abn:AB57_3884"/>
<dbReference type="HOGENOM" id="CLU_187346_2_0_6"/>
<dbReference type="Proteomes" id="UP000007094">
    <property type="component" value="Chromosome"/>
</dbReference>
<dbReference type="GO" id="GO:0005886">
    <property type="term" value="C:plasma membrane"/>
    <property type="evidence" value="ECO:0007669"/>
    <property type="project" value="UniProtKB-SubCell"/>
</dbReference>
<dbReference type="HAMAP" id="MF_01361">
    <property type="entry name" value="UPF0391"/>
    <property type="match status" value="1"/>
</dbReference>
<dbReference type="InterPro" id="IPR009760">
    <property type="entry name" value="DUF1328"/>
</dbReference>
<dbReference type="NCBIfam" id="NF010227">
    <property type="entry name" value="PRK13682.1-2"/>
    <property type="match status" value="1"/>
</dbReference>
<dbReference type="NCBIfam" id="NF010229">
    <property type="entry name" value="PRK13682.1-4"/>
    <property type="match status" value="1"/>
</dbReference>
<dbReference type="Pfam" id="PF07043">
    <property type="entry name" value="DUF1328"/>
    <property type="match status" value="1"/>
</dbReference>
<dbReference type="PIRSF" id="PIRSF036466">
    <property type="entry name" value="UCP036466"/>
    <property type="match status" value="1"/>
</dbReference>
<name>Y3884_ACIB5</name>
<organism>
    <name type="scientific">Acinetobacter baumannii (strain AB0057)</name>
    <dbReference type="NCBI Taxonomy" id="480119"/>
    <lineage>
        <taxon>Bacteria</taxon>
        <taxon>Pseudomonadati</taxon>
        <taxon>Pseudomonadota</taxon>
        <taxon>Gammaproteobacteria</taxon>
        <taxon>Moraxellales</taxon>
        <taxon>Moraxellaceae</taxon>
        <taxon>Acinetobacter</taxon>
        <taxon>Acinetobacter calcoaceticus/baumannii complex</taxon>
    </lineage>
</organism>
<evidence type="ECO:0000255" key="1">
    <source>
        <dbReference type="HAMAP-Rule" id="MF_01361"/>
    </source>
</evidence>
<accession>B7I295</accession>
<sequence length="52" mass="5462">MFRWAIIFAVIALIASLLGFGGVAGLSKDFAVILLVIAVILAVIGFISRGRT</sequence>
<proteinExistence type="inferred from homology"/>
<reference key="1">
    <citation type="journal article" date="2008" name="J. Bacteriol.">
        <title>Comparative genome sequence analysis of multidrug-resistant Acinetobacter baumannii.</title>
        <authorList>
            <person name="Adams M.D."/>
            <person name="Goglin K."/>
            <person name="Molyneaux N."/>
            <person name="Hujer K.M."/>
            <person name="Lavender H."/>
            <person name="Jamison J.J."/>
            <person name="MacDonald I.J."/>
            <person name="Martin K.M."/>
            <person name="Russo T."/>
            <person name="Campagnari A.A."/>
            <person name="Hujer A.M."/>
            <person name="Bonomo R.A."/>
            <person name="Gill S.R."/>
        </authorList>
    </citation>
    <scope>NUCLEOTIDE SEQUENCE [LARGE SCALE GENOMIC DNA]</scope>
    <source>
        <strain>AB0057</strain>
    </source>
</reference>
<gene>
    <name type="ordered locus">AB57_3884</name>
</gene>
<protein>
    <recommendedName>
        <fullName evidence="1">UPF0391 membrane protein AB57_3884</fullName>
    </recommendedName>
</protein>
<comment type="subcellular location">
    <subcellularLocation>
        <location evidence="1">Cell membrane</location>
        <topology evidence="1">Multi-pass membrane protein</topology>
    </subcellularLocation>
</comment>
<comment type="similarity">
    <text evidence="1">Belongs to the UPF0391 family.</text>
</comment>
<keyword id="KW-1003">Cell membrane</keyword>
<keyword id="KW-0472">Membrane</keyword>
<keyword id="KW-0812">Transmembrane</keyword>
<keyword id="KW-1133">Transmembrane helix</keyword>